<protein>
    <recommendedName>
        <fullName evidence="2">Small ribosomal subunit protein uS3c</fullName>
    </recommendedName>
    <alternativeName>
        <fullName>30S ribosomal protein S3, chloroplastic</fullName>
    </alternativeName>
</protein>
<evidence type="ECO:0000250" key="1"/>
<evidence type="ECO:0000305" key="2"/>
<feature type="chain" id="PRO_0000293941" description="Small ribosomal subunit protein uS3c">
    <location>
        <begin position="1"/>
        <end position="218"/>
    </location>
</feature>
<feature type="domain" description="KH type-2">
    <location>
        <begin position="47"/>
        <end position="118"/>
    </location>
</feature>
<comment type="subunit">
    <text evidence="1">Part of the 30S ribosomal subunit.</text>
</comment>
<comment type="subcellular location">
    <subcellularLocation>
        <location>Plastid</location>
        <location>Chloroplast</location>
    </subcellularLocation>
</comment>
<comment type="similarity">
    <text evidence="2">Belongs to the universal ribosomal protein uS3 family.</text>
</comment>
<geneLocation type="chloroplast"/>
<accession>A4QKW9</accession>
<proteinExistence type="inferred from homology"/>
<sequence length="218" mass="25070">MGQKINPLGFRLGTTQSHHSLWFAQPKKYSEGLEEDKKIRDCIKNYVQKNIRISSGMEGIARIEIQKRIDLIQIIIYMGFPKLLIEDKPRRVEELQMNVQKELNCVNKKLNIAITRISNPYGDPNILAEFIAGQLKNRVSFRKAMKKAIELTEQANTKGIQVQIAGRIDGKEIARVEWIREGRVPLQTIEAKIDYCSSTVRTIYGVLGIKIWIFVDED</sequence>
<name>RR3_CRUWA</name>
<keyword id="KW-0150">Chloroplast</keyword>
<keyword id="KW-0934">Plastid</keyword>
<keyword id="KW-0687">Ribonucleoprotein</keyword>
<keyword id="KW-0689">Ribosomal protein</keyword>
<keyword id="KW-0694">RNA-binding</keyword>
<keyword id="KW-0699">rRNA-binding</keyword>
<reference key="1">
    <citation type="submission" date="2007-03" db="EMBL/GenBank/DDBJ databases">
        <title>Sequencing analysis of Crucihimalaya wallichii chloroplast DNA.</title>
        <authorList>
            <person name="Hosouchi T."/>
            <person name="Tsuruoka H."/>
            <person name="Kotani H."/>
        </authorList>
    </citation>
    <scope>NUCLEOTIDE SEQUENCE [LARGE SCALE GENOMIC DNA]</scope>
</reference>
<gene>
    <name type="primary">rps3</name>
</gene>
<dbReference type="EMBL" id="AP009372">
    <property type="protein sequence ID" value="BAF50324.1"/>
    <property type="molecule type" value="Genomic_DNA"/>
</dbReference>
<dbReference type="RefSeq" id="YP_001123500.1">
    <property type="nucleotide sequence ID" value="NC_009271.1"/>
</dbReference>
<dbReference type="SMR" id="A4QKW9"/>
<dbReference type="GeneID" id="4962641"/>
<dbReference type="GO" id="GO:0009507">
    <property type="term" value="C:chloroplast"/>
    <property type="evidence" value="ECO:0007669"/>
    <property type="project" value="UniProtKB-SubCell"/>
</dbReference>
<dbReference type="GO" id="GO:0022627">
    <property type="term" value="C:cytosolic small ribosomal subunit"/>
    <property type="evidence" value="ECO:0007669"/>
    <property type="project" value="TreeGrafter"/>
</dbReference>
<dbReference type="GO" id="GO:0019843">
    <property type="term" value="F:rRNA binding"/>
    <property type="evidence" value="ECO:0007669"/>
    <property type="project" value="UniProtKB-UniRule"/>
</dbReference>
<dbReference type="GO" id="GO:0003735">
    <property type="term" value="F:structural constituent of ribosome"/>
    <property type="evidence" value="ECO:0007669"/>
    <property type="project" value="InterPro"/>
</dbReference>
<dbReference type="GO" id="GO:0006412">
    <property type="term" value="P:translation"/>
    <property type="evidence" value="ECO:0007669"/>
    <property type="project" value="UniProtKB-UniRule"/>
</dbReference>
<dbReference type="CDD" id="cd02412">
    <property type="entry name" value="KH-II_30S_S3"/>
    <property type="match status" value="1"/>
</dbReference>
<dbReference type="FunFam" id="3.30.1140.32:FF:000003">
    <property type="entry name" value="30S ribosomal protein S3, chloroplastic"/>
    <property type="match status" value="1"/>
</dbReference>
<dbReference type="FunFam" id="3.30.300.20:FF:000008">
    <property type="entry name" value="30S ribosomal protein S3, chloroplastic"/>
    <property type="match status" value="1"/>
</dbReference>
<dbReference type="Gene3D" id="3.30.300.20">
    <property type="match status" value="1"/>
</dbReference>
<dbReference type="Gene3D" id="3.30.1140.32">
    <property type="entry name" value="Ribosomal protein S3, C-terminal domain"/>
    <property type="match status" value="1"/>
</dbReference>
<dbReference type="HAMAP" id="MF_01309_B">
    <property type="entry name" value="Ribosomal_uS3_B"/>
    <property type="match status" value="1"/>
</dbReference>
<dbReference type="InterPro" id="IPR015946">
    <property type="entry name" value="KH_dom-like_a/b"/>
</dbReference>
<dbReference type="InterPro" id="IPR004044">
    <property type="entry name" value="KH_dom_type_2"/>
</dbReference>
<dbReference type="InterPro" id="IPR009019">
    <property type="entry name" value="KH_sf_prok-type"/>
</dbReference>
<dbReference type="InterPro" id="IPR036419">
    <property type="entry name" value="Ribosomal_S3_C_sf"/>
</dbReference>
<dbReference type="InterPro" id="IPR005704">
    <property type="entry name" value="Ribosomal_uS3_bac-typ"/>
</dbReference>
<dbReference type="InterPro" id="IPR001351">
    <property type="entry name" value="Ribosomal_uS3_C"/>
</dbReference>
<dbReference type="InterPro" id="IPR018280">
    <property type="entry name" value="Ribosomal_uS3_CS"/>
</dbReference>
<dbReference type="NCBIfam" id="TIGR01009">
    <property type="entry name" value="rpsC_bact"/>
    <property type="match status" value="1"/>
</dbReference>
<dbReference type="PANTHER" id="PTHR11760">
    <property type="entry name" value="30S/40S RIBOSOMAL PROTEIN S3"/>
    <property type="match status" value="1"/>
</dbReference>
<dbReference type="PANTHER" id="PTHR11760:SF19">
    <property type="entry name" value="SMALL RIBOSOMAL SUBUNIT PROTEIN US3C"/>
    <property type="match status" value="1"/>
</dbReference>
<dbReference type="Pfam" id="PF00189">
    <property type="entry name" value="Ribosomal_S3_C"/>
    <property type="match status" value="1"/>
</dbReference>
<dbReference type="SUPFAM" id="SSF54814">
    <property type="entry name" value="Prokaryotic type KH domain (KH-domain type II)"/>
    <property type="match status" value="1"/>
</dbReference>
<dbReference type="SUPFAM" id="SSF54821">
    <property type="entry name" value="Ribosomal protein S3 C-terminal domain"/>
    <property type="match status" value="1"/>
</dbReference>
<dbReference type="PROSITE" id="PS50823">
    <property type="entry name" value="KH_TYPE_2"/>
    <property type="match status" value="1"/>
</dbReference>
<dbReference type="PROSITE" id="PS00548">
    <property type="entry name" value="RIBOSOMAL_S3"/>
    <property type="match status" value="1"/>
</dbReference>
<organism>
    <name type="scientific">Crucihimalaya wallichii</name>
    <name type="common">Rock-cress</name>
    <name type="synonym">Arabidopsis campestris</name>
    <dbReference type="NCBI Taxonomy" id="78192"/>
    <lineage>
        <taxon>Eukaryota</taxon>
        <taxon>Viridiplantae</taxon>
        <taxon>Streptophyta</taxon>
        <taxon>Embryophyta</taxon>
        <taxon>Tracheophyta</taxon>
        <taxon>Spermatophyta</taxon>
        <taxon>Magnoliopsida</taxon>
        <taxon>eudicotyledons</taxon>
        <taxon>Gunneridae</taxon>
        <taxon>Pentapetalae</taxon>
        <taxon>rosids</taxon>
        <taxon>malvids</taxon>
        <taxon>Brassicales</taxon>
        <taxon>Brassicaceae</taxon>
        <taxon>Crucihimalayeae</taxon>
        <taxon>Crucihimalaya</taxon>
    </lineage>
</organism>